<protein>
    <recommendedName>
        <fullName evidence="1">Photosystem II D2 protein</fullName>
        <shortName evidence="1">PSII D2 protein</shortName>
        <ecNumber evidence="1">1.10.3.9</ecNumber>
    </recommendedName>
    <alternativeName>
        <fullName evidence="1">Photosystem Q(A) protein</fullName>
    </alternativeName>
</protein>
<gene>
    <name evidence="1" type="primary">psbD1</name>
    <name type="ordered locus">cce_0660</name>
</gene>
<gene>
    <name evidence="1" type="primary">psbD2</name>
    <name type="ordered locus">cce_2485</name>
</gene>
<reference key="1">
    <citation type="journal article" date="2008" name="Proc. Natl. Acad. Sci. U.S.A.">
        <title>The genome of Cyanothece 51142, a unicellular diazotrophic cyanobacterium important in the marine nitrogen cycle.</title>
        <authorList>
            <person name="Welsh E.A."/>
            <person name="Liberton M."/>
            <person name="Stoeckel J."/>
            <person name="Loh T."/>
            <person name="Elvitigala T."/>
            <person name="Wang C."/>
            <person name="Wollam A."/>
            <person name="Fulton R.S."/>
            <person name="Clifton S.W."/>
            <person name="Jacobs J.M."/>
            <person name="Aurora R."/>
            <person name="Ghosh B.K."/>
            <person name="Sherman L.A."/>
            <person name="Smith R.D."/>
            <person name="Wilson R.K."/>
            <person name="Pakrasi H.B."/>
        </authorList>
    </citation>
    <scope>NUCLEOTIDE SEQUENCE [LARGE SCALE GENOMIC DNA]</scope>
    <source>
        <strain>ATCC 51142 / BH68</strain>
    </source>
</reference>
<feature type="chain" id="PRO_0000359601" description="Photosystem II D2 protein">
    <location>
        <begin position="1"/>
        <end position="351"/>
    </location>
</feature>
<feature type="transmembrane region" description="Helical" evidence="1">
    <location>
        <begin position="39"/>
        <end position="59"/>
    </location>
</feature>
<feature type="transmembrane region" description="Helical" evidence="1">
    <location>
        <begin position="123"/>
        <end position="139"/>
    </location>
</feature>
<feature type="transmembrane region" description="Helical" evidence="1">
    <location>
        <begin position="151"/>
        <end position="164"/>
    </location>
</feature>
<feature type="transmembrane region" description="Helical" evidence="1">
    <location>
        <begin position="206"/>
        <end position="226"/>
    </location>
</feature>
<feature type="transmembrane region" description="Helical" evidence="1">
    <location>
        <begin position="277"/>
        <end position="293"/>
    </location>
</feature>
<feature type="binding site" description="axial binding residue" evidence="1">
    <location>
        <position position="116"/>
    </location>
    <ligand>
        <name>chlorophyll a</name>
        <dbReference type="ChEBI" id="CHEBI:58416"/>
        <label>ChlzD2</label>
    </ligand>
    <ligandPart>
        <name>Mg</name>
        <dbReference type="ChEBI" id="CHEBI:25107"/>
    </ligandPart>
</feature>
<feature type="binding site" evidence="1">
    <location>
        <position position="128"/>
    </location>
    <ligand>
        <name>pheophytin a</name>
        <dbReference type="ChEBI" id="CHEBI:136840"/>
        <label>D2</label>
    </ligand>
</feature>
<feature type="binding site" evidence="1">
    <location>
        <position position="141"/>
    </location>
    <ligand>
        <name>pheophytin a</name>
        <dbReference type="ChEBI" id="CHEBI:136840"/>
        <label>D2</label>
    </ligand>
</feature>
<feature type="binding site" description="axial binding residue" evidence="1">
    <location>
        <position position="196"/>
    </location>
    <ligand>
        <name>chlorophyll a</name>
        <dbReference type="ChEBI" id="CHEBI:58416"/>
        <label>PD2</label>
    </ligand>
    <ligandPart>
        <name>Mg</name>
        <dbReference type="ChEBI" id="CHEBI:25107"/>
    </ligandPart>
</feature>
<feature type="binding site" evidence="1">
    <location>
        <position position="213"/>
    </location>
    <ligand>
        <name>a plastoquinone</name>
        <dbReference type="ChEBI" id="CHEBI:17757"/>
        <label>Q(A)</label>
    </ligand>
</feature>
<feature type="binding site" evidence="1">
    <location>
        <position position="213"/>
    </location>
    <ligand>
        <name>Fe cation</name>
        <dbReference type="ChEBI" id="CHEBI:24875"/>
        <note>ligand shared with heterodimeric partner</note>
    </ligand>
</feature>
<feature type="binding site" evidence="1">
    <location>
        <position position="260"/>
    </location>
    <ligand>
        <name>a plastoquinone</name>
        <dbReference type="ChEBI" id="CHEBI:17757"/>
        <label>Q(A)</label>
    </ligand>
</feature>
<feature type="binding site" evidence="1">
    <location>
        <position position="267"/>
    </location>
    <ligand>
        <name>Fe cation</name>
        <dbReference type="ChEBI" id="CHEBI:24875"/>
        <note>ligand shared with heterodimeric partner</note>
    </ligand>
</feature>
<comment type="function">
    <text evidence="1">Photosystem II (PSII) is a light-driven water:plastoquinone oxidoreductase that uses light energy to abstract electrons from H(2)O, generating O(2) and a proton gradient subsequently used for ATP formation. It consists of a core antenna complex that captures photons, and an electron transfer chain that converts photonic excitation into a charge separation. The D1/D2 (PsbA/PsbD) reaction center heterodimer binds P680, the primary electron donor of PSII as well as several subsequent electron acceptors. D2 is needed for assembly of a stable PSII complex.</text>
</comment>
<comment type="catalytic activity">
    <reaction evidence="1">
        <text>2 a plastoquinone + 4 hnu + 2 H2O = 2 a plastoquinol + O2</text>
        <dbReference type="Rhea" id="RHEA:36359"/>
        <dbReference type="Rhea" id="RHEA-COMP:9561"/>
        <dbReference type="Rhea" id="RHEA-COMP:9562"/>
        <dbReference type="ChEBI" id="CHEBI:15377"/>
        <dbReference type="ChEBI" id="CHEBI:15379"/>
        <dbReference type="ChEBI" id="CHEBI:17757"/>
        <dbReference type="ChEBI" id="CHEBI:30212"/>
        <dbReference type="ChEBI" id="CHEBI:62192"/>
        <dbReference type="EC" id="1.10.3.9"/>
    </reaction>
</comment>
<comment type="cofactor">
    <text evidence="1">The D1/D2 heterodimer binds P680, chlorophylls that are the primary electron donor of PSII, and subsequent electron acceptors. It shares a non-heme iron and each subunit binds pheophytin, quinone, additional chlorophylls, carotenoids and lipids. There is also a Cl(-1) ion associated with D1 and D2, which is required for oxygen evolution. The PSII complex binds additional chlorophylls, carotenoids and specific lipids.</text>
</comment>
<comment type="subunit">
    <text evidence="1">PSII is composed of 1 copy each of membrane proteins PsbA, PsbB, PsbC, PsbD, PsbE, PsbF, PsbH, PsbI, PsbJ, PsbK, PsbL, PsbM, PsbT, PsbX, PsbY, PsbZ, Psb30/Ycf12, peripheral proteins PsbO, CyanoQ (PsbQ), PsbU, PsbV and a large number of cofactors. It forms dimeric complexes.</text>
</comment>
<comment type="subcellular location">
    <subcellularLocation>
        <location evidence="1">Cellular thylakoid membrane</location>
        <topology evidence="1">Multi-pass membrane protein</topology>
    </subcellularLocation>
</comment>
<comment type="miscellaneous">
    <text evidence="1">2 of the reaction center chlorophylls (ChlD1 and ChlD2) are entirely coordinated by water.</text>
</comment>
<comment type="similarity">
    <text evidence="1">Belongs to the reaction center PufL/M/PsbA/D family.</text>
</comment>
<comment type="sequence caution" evidence="2">
    <conflict type="erroneous initiation">
        <sequence resource="EMBL-CDS" id="ACB50011"/>
    </conflict>
    <text>Extended N-terminus.</text>
</comment>
<evidence type="ECO:0000255" key="1">
    <source>
        <dbReference type="HAMAP-Rule" id="MF_01383"/>
    </source>
</evidence>
<evidence type="ECO:0000305" key="2"/>
<name>PSBD_CROS5</name>
<accession>B1WQ89</accession>
<accession>B1WRI4</accession>
<dbReference type="EC" id="1.10.3.9" evidence="1"/>
<dbReference type="EMBL" id="CP000806">
    <property type="protein sequence ID" value="ACB50011.1"/>
    <property type="status" value="ALT_INIT"/>
    <property type="molecule type" value="Genomic_DNA"/>
</dbReference>
<dbReference type="EMBL" id="CP000806">
    <property type="protein sequence ID" value="ACB51833.1"/>
    <property type="molecule type" value="Genomic_DNA"/>
</dbReference>
<dbReference type="RefSeq" id="WP_009544824.1">
    <property type="nucleotide sequence ID" value="NC_010546.1"/>
</dbReference>
<dbReference type="SMR" id="B1WQ89"/>
<dbReference type="STRING" id="43989.cce_0660"/>
<dbReference type="KEGG" id="cyt:cce_0660"/>
<dbReference type="KEGG" id="cyt:cce_2485"/>
<dbReference type="eggNOG" id="ENOG502Z8JK">
    <property type="taxonomic scope" value="Bacteria"/>
</dbReference>
<dbReference type="HOGENOM" id="CLU_077965_0_0_3"/>
<dbReference type="OrthoDB" id="505356at2"/>
<dbReference type="Proteomes" id="UP000001203">
    <property type="component" value="Chromosome circular"/>
</dbReference>
<dbReference type="GO" id="GO:0009523">
    <property type="term" value="C:photosystem II"/>
    <property type="evidence" value="ECO:0007669"/>
    <property type="project" value="UniProtKB-KW"/>
</dbReference>
<dbReference type="GO" id="GO:0031676">
    <property type="term" value="C:plasma membrane-derived thylakoid membrane"/>
    <property type="evidence" value="ECO:0007669"/>
    <property type="project" value="UniProtKB-SubCell"/>
</dbReference>
<dbReference type="GO" id="GO:0016168">
    <property type="term" value="F:chlorophyll binding"/>
    <property type="evidence" value="ECO:0007669"/>
    <property type="project" value="UniProtKB-UniRule"/>
</dbReference>
<dbReference type="GO" id="GO:0045156">
    <property type="term" value="F:electron transporter, transferring electrons within the cyclic electron transport pathway of photosynthesis activity"/>
    <property type="evidence" value="ECO:0007669"/>
    <property type="project" value="InterPro"/>
</dbReference>
<dbReference type="GO" id="GO:0005506">
    <property type="term" value="F:iron ion binding"/>
    <property type="evidence" value="ECO:0007669"/>
    <property type="project" value="UniProtKB-UniRule"/>
</dbReference>
<dbReference type="GO" id="GO:0010242">
    <property type="term" value="F:oxygen evolving activity"/>
    <property type="evidence" value="ECO:0007669"/>
    <property type="project" value="UniProtKB-EC"/>
</dbReference>
<dbReference type="GO" id="GO:0009772">
    <property type="term" value="P:photosynthetic electron transport in photosystem II"/>
    <property type="evidence" value="ECO:0007669"/>
    <property type="project" value="InterPro"/>
</dbReference>
<dbReference type="CDD" id="cd09288">
    <property type="entry name" value="Photosystem-II_D2"/>
    <property type="match status" value="1"/>
</dbReference>
<dbReference type="FunFam" id="1.20.85.10:FF:000001">
    <property type="entry name" value="photosystem II D2 protein-like"/>
    <property type="match status" value="1"/>
</dbReference>
<dbReference type="Gene3D" id="1.20.85.10">
    <property type="entry name" value="Photosystem II protein D1-like"/>
    <property type="match status" value="1"/>
</dbReference>
<dbReference type="HAMAP" id="MF_01383">
    <property type="entry name" value="PSII_PsbD_D2"/>
    <property type="match status" value="1"/>
</dbReference>
<dbReference type="InterPro" id="IPR055266">
    <property type="entry name" value="D1/D2"/>
</dbReference>
<dbReference type="InterPro" id="IPR036854">
    <property type="entry name" value="Photo_II_D1/D2_sf"/>
</dbReference>
<dbReference type="InterPro" id="IPR000484">
    <property type="entry name" value="Photo_RC_L/M"/>
</dbReference>
<dbReference type="InterPro" id="IPR055265">
    <property type="entry name" value="Photo_RC_L/M_CS"/>
</dbReference>
<dbReference type="InterPro" id="IPR005868">
    <property type="entry name" value="PSII_PsbD/D2"/>
</dbReference>
<dbReference type="NCBIfam" id="TIGR01152">
    <property type="entry name" value="psbD"/>
    <property type="match status" value="1"/>
</dbReference>
<dbReference type="PANTHER" id="PTHR33149:SF12">
    <property type="entry name" value="PHOTOSYSTEM II D2 PROTEIN"/>
    <property type="match status" value="1"/>
</dbReference>
<dbReference type="PANTHER" id="PTHR33149">
    <property type="entry name" value="PHOTOSYSTEM II PROTEIN D1"/>
    <property type="match status" value="1"/>
</dbReference>
<dbReference type="Pfam" id="PF00124">
    <property type="entry name" value="Photo_RC"/>
    <property type="match status" value="1"/>
</dbReference>
<dbReference type="PRINTS" id="PR00256">
    <property type="entry name" value="REACTNCENTRE"/>
</dbReference>
<dbReference type="SUPFAM" id="SSF81483">
    <property type="entry name" value="Bacterial photosystem II reaction centre, L and M subunits"/>
    <property type="match status" value="1"/>
</dbReference>
<dbReference type="PROSITE" id="PS00244">
    <property type="entry name" value="REACTION_CENTER"/>
    <property type="match status" value="1"/>
</dbReference>
<keyword id="KW-0148">Chlorophyll</keyword>
<keyword id="KW-0157">Chromophore</keyword>
<keyword id="KW-0249">Electron transport</keyword>
<keyword id="KW-0408">Iron</keyword>
<keyword id="KW-0460">Magnesium</keyword>
<keyword id="KW-0472">Membrane</keyword>
<keyword id="KW-0479">Metal-binding</keyword>
<keyword id="KW-0560">Oxidoreductase</keyword>
<keyword id="KW-0602">Photosynthesis</keyword>
<keyword id="KW-0604">Photosystem II</keyword>
<keyword id="KW-1185">Reference proteome</keyword>
<keyword id="KW-0793">Thylakoid</keyword>
<keyword id="KW-0812">Transmembrane</keyword>
<keyword id="KW-1133">Transmembrane helix</keyword>
<keyword id="KW-0813">Transport</keyword>
<sequence length="351" mass="39337">MTIAVGRAPERGWFDVLDDWLKRDRFVFVGWSGLLLFPCAYLALGGWLTGTTFVTSWYTHGLASSYLEGCNFLTVAVSSPANAFGHSLLFLWGPEAQGDFTRWCQIGGLWTFTALHGAFGLIGFMLRQFEIARLVGIRPYNAIAFSAPIAVFVSVFLMYPLGQSSWFFGPSFGVAGIFRFILFLQGFHNWTLNPFHMMGVAGVLGGALLCAIHGATVENTLFEDGEQANTFRAFEPTQAEETYSMVTANRFWSQIFGIAFSNKRWLHFFMLFVPVTGLWMSAIGIVGLALNLRAYDFVSQELRAAEDPEFETFYTKNILLNEGLRAWMAPQDQPHQNFVFPEEVLPRGNAL</sequence>
<proteinExistence type="inferred from homology"/>
<organism>
    <name type="scientific">Crocosphaera subtropica (strain ATCC 51142 / BH68)</name>
    <name type="common">Cyanothece sp. (strain ATCC 51142)</name>
    <dbReference type="NCBI Taxonomy" id="43989"/>
    <lineage>
        <taxon>Bacteria</taxon>
        <taxon>Bacillati</taxon>
        <taxon>Cyanobacteriota</taxon>
        <taxon>Cyanophyceae</taxon>
        <taxon>Oscillatoriophycideae</taxon>
        <taxon>Chroococcales</taxon>
        <taxon>Aphanothecaceae</taxon>
        <taxon>Crocosphaera</taxon>
        <taxon>Crocosphaera subtropica</taxon>
    </lineage>
</organism>